<comment type="catalytic activity">
    <reaction evidence="1">
        <text>2-(N(omega)-L-arginino)succinate = fumarate + L-arginine</text>
        <dbReference type="Rhea" id="RHEA:24020"/>
        <dbReference type="ChEBI" id="CHEBI:29806"/>
        <dbReference type="ChEBI" id="CHEBI:32682"/>
        <dbReference type="ChEBI" id="CHEBI:57472"/>
        <dbReference type="EC" id="4.3.2.1"/>
    </reaction>
</comment>
<comment type="pathway">
    <text evidence="1">Amino-acid biosynthesis; L-arginine biosynthesis; L-arginine from L-ornithine and carbamoyl phosphate: step 3/3.</text>
</comment>
<comment type="subcellular location">
    <subcellularLocation>
        <location evidence="1">Cytoplasm</location>
    </subcellularLocation>
</comment>
<comment type="similarity">
    <text evidence="1">Belongs to the lyase 1 family. Argininosuccinate lyase subfamily.</text>
</comment>
<evidence type="ECO:0000255" key="1">
    <source>
        <dbReference type="HAMAP-Rule" id="MF_00006"/>
    </source>
</evidence>
<accession>A7NF38</accession>
<dbReference type="EC" id="4.3.2.1" evidence="1"/>
<dbReference type="EMBL" id="CP000804">
    <property type="protein sequence ID" value="ABU59129.1"/>
    <property type="molecule type" value="Genomic_DNA"/>
</dbReference>
<dbReference type="RefSeq" id="WP_012121553.1">
    <property type="nucleotide sequence ID" value="NC_009767.1"/>
</dbReference>
<dbReference type="SMR" id="A7NF38"/>
<dbReference type="STRING" id="383372.Rcas_3075"/>
<dbReference type="KEGG" id="rca:Rcas_3075"/>
<dbReference type="eggNOG" id="COG0165">
    <property type="taxonomic scope" value="Bacteria"/>
</dbReference>
<dbReference type="HOGENOM" id="CLU_027272_2_2_0"/>
<dbReference type="OrthoDB" id="9769623at2"/>
<dbReference type="UniPathway" id="UPA00068">
    <property type="reaction ID" value="UER00114"/>
</dbReference>
<dbReference type="Proteomes" id="UP000000263">
    <property type="component" value="Chromosome"/>
</dbReference>
<dbReference type="GO" id="GO:0005829">
    <property type="term" value="C:cytosol"/>
    <property type="evidence" value="ECO:0007669"/>
    <property type="project" value="TreeGrafter"/>
</dbReference>
<dbReference type="GO" id="GO:0004056">
    <property type="term" value="F:argininosuccinate lyase activity"/>
    <property type="evidence" value="ECO:0007669"/>
    <property type="project" value="UniProtKB-UniRule"/>
</dbReference>
<dbReference type="GO" id="GO:0042450">
    <property type="term" value="P:arginine biosynthetic process via ornithine"/>
    <property type="evidence" value="ECO:0007669"/>
    <property type="project" value="InterPro"/>
</dbReference>
<dbReference type="GO" id="GO:0006526">
    <property type="term" value="P:L-arginine biosynthetic process"/>
    <property type="evidence" value="ECO:0007669"/>
    <property type="project" value="UniProtKB-UniRule"/>
</dbReference>
<dbReference type="CDD" id="cd01359">
    <property type="entry name" value="Argininosuccinate_lyase"/>
    <property type="match status" value="1"/>
</dbReference>
<dbReference type="FunFam" id="1.10.275.10:FF:000002">
    <property type="entry name" value="Argininosuccinate lyase"/>
    <property type="match status" value="1"/>
</dbReference>
<dbReference type="FunFam" id="1.10.40.30:FF:000001">
    <property type="entry name" value="Argininosuccinate lyase"/>
    <property type="match status" value="1"/>
</dbReference>
<dbReference type="FunFam" id="1.20.200.10:FF:000019">
    <property type="entry name" value="Argininosuccinate lyase chloroplastic"/>
    <property type="match status" value="1"/>
</dbReference>
<dbReference type="Gene3D" id="1.10.40.30">
    <property type="entry name" value="Fumarase/aspartase (C-terminal domain)"/>
    <property type="match status" value="1"/>
</dbReference>
<dbReference type="Gene3D" id="1.20.200.10">
    <property type="entry name" value="Fumarase/aspartase (Central domain)"/>
    <property type="match status" value="1"/>
</dbReference>
<dbReference type="Gene3D" id="1.10.275.10">
    <property type="entry name" value="Fumarase/aspartase (N-terminal domain)"/>
    <property type="match status" value="1"/>
</dbReference>
<dbReference type="HAMAP" id="MF_00006">
    <property type="entry name" value="Arg_succ_lyase"/>
    <property type="match status" value="1"/>
</dbReference>
<dbReference type="InterPro" id="IPR029419">
    <property type="entry name" value="Arg_succ_lyase_C"/>
</dbReference>
<dbReference type="InterPro" id="IPR009049">
    <property type="entry name" value="Argininosuccinate_lyase"/>
</dbReference>
<dbReference type="InterPro" id="IPR024083">
    <property type="entry name" value="Fumarase/histidase_N"/>
</dbReference>
<dbReference type="InterPro" id="IPR020557">
    <property type="entry name" value="Fumarate_lyase_CS"/>
</dbReference>
<dbReference type="InterPro" id="IPR000362">
    <property type="entry name" value="Fumarate_lyase_fam"/>
</dbReference>
<dbReference type="InterPro" id="IPR022761">
    <property type="entry name" value="Fumarate_lyase_N"/>
</dbReference>
<dbReference type="InterPro" id="IPR008948">
    <property type="entry name" value="L-Aspartase-like"/>
</dbReference>
<dbReference type="NCBIfam" id="TIGR00838">
    <property type="entry name" value="argH"/>
    <property type="match status" value="1"/>
</dbReference>
<dbReference type="PANTHER" id="PTHR43814">
    <property type="entry name" value="ARGININOSUCCINATE LYASE"/>
    <property type="match status" value="1"/>
</dbReference>
<dbReference type="PANTHER" id="PTHR43814:SF1">
    <property type="entry name" value="ARGININOSUCCINATE LYASE"/>
    <property type="match status" value="1"/>
</dbReference>
<dbReference type="Pfam" id="PF14698">
    <property type="entry name" value="ASL_C2"/>
    <property type="match status" value="1"/>
</dbReference>
<dbReference type="Pfam" id="PF00206">
    <property type="entry name" value="Lyase_1"/>
    <property type="match status" value="1"/>
</dbReference>
<dbReference type="PRINTS" id="PR00145">
    <property type="entry name" value="ARGSUCLYASE"/>
</dbReference>
<dbReference type="PRINTS" id="PR00149">
    <property type="entry name" value="FUMRATELYASE"/>
</dbReference>
<dbReference type="SUPFAM" id="SSF48557">
    <property type="entry name" value="L-aspartase-like"/>
    <property type="match status" value="1"/>
</dbReference>
<dbReference type="PROSITE" id="PS00163">
    <property type="entry name" value="FUMARATE_LYASES"/>
    <property type="match status" value="1"/>
</dbReference>
<name>ARLY_ROSCS</name>
<feature type="chain" id="PRO_1000073854" description="Argininosuccinate lyase">
    <location>
        <begin position="1"/>
        <end position="455"/>
    </location>
</feature>
<reference key="1">
    <citation type="submission" date="2007-08" db="EMBL/GenBank/DDBJ databases">
        <title>Complete sequence of Roseiflexus castenholzii DSM 13941.</title>
        <authorList>
            <consortium name="US DOE Joint Genome Institute"/>
            <person name="Copeland A."/>
            <person name="Lucas S."/>
            <person name="Lapidus A."/>
            <person name="Barry K."/>
            <person name="Glavina del Rio T."/>
            <person name="Dalin E."/>
            <person name="Tice H."/>
            <person name="Pitluck S."/>
            <person name="Thompson L.S."/>
            <person name="Brettin T."/>
            <person name="Bruce D."/>
            <person name="Detter J.C."/>
            <person name="Han C."/>
            <person name="Tapia R."/>
            <person name="Schmutz J."/>
            <person name="Larimer F."/>
            <person name="Land M."/>
            <person name="Hauser L."/>
            <person name="Kyrpides N."/>
            <person name="Mikhailova N."/>
            <person name="Bryant D.A."/>
            <person name="Hanada S."/>
            <person name="Tsukatani Y."/>
            <person name="Richardson P."/>
        </authorList>
    </citation>
    <scope>NUCLEOTIDE SEQUENCE [LARGE SCALE GENOMIC DNA]</scope>
    <source>
        <strain>DSM 13941 / HLO8</strain>
    </source>
</reference>
<organism>
    <name type="scientific">Roseiflexus castenholzii (strain DSM 13941 / HLO8)</name>
    <dbReference type="NCBI Taxonomy" id="383372"/>
    <lineage>
        <taxon>Bacteria</taxon>
        <taxon>Bacillati</taxon>
        <taxon>Chloroflexota</taxon>
        <taxon>Chloroflexia</taxon>
        <taxon>Chloroflexales</taxon>
        <taxon>Roseiflexineae</taxon>
        <taxon>Roseiflexaceae</taxon>
        <taxon>Roseiflexus</taxon>
    </lineage>
</organism>
<proteinExistence type="inferred from homology"/>
<sequence length="455" mass="49591">MWGGRFDEGIDARMARFNNSFPFDQRMWREDIRGSMAWARQLAQAGVISTEERDTLLTGLETVFAEFANDRFEARPTDEDIHTAIERRLGELVGAVAGKLHTGRSRNDQVATDVRLWTMGAIQRIDDGVRALQQALLTQAEAAGDALMPGYTHLQRAQPVLLAHWLLSHFWSAQRDRERLTDCAKRTSVLPLGSGAIAGTPLAIDRAALAADLGMAAISPNSIDAVSDRDFVAEFLFCAALIGIHLSRLAEDMIIYSSAEFGFVVLADAYSTGSSLMPQKKNPDSFELLRGKAGRLTGDLVTVLTVLKGIPSAYDKDLQEDKEPLFDAADTLELALPVAAGAVATARFRHDRMRAALDDAMLATDAADYLVARGVPFREAHHVVGRLVREAEQRGVALSALPLDILLAAHPACGSDILQVFDMDRSAAQRRVPGATAPGSVREQIIRARQCLGEH</sequence>
<protein>
    <recommendedName>
        <fullName evidence="1">Argininosuccinate lyase</fullName>
        <shortName evidence="1">ASAL</shortName>
        <ecNumber evidence="1">4.3.2.1</ecNumber>
    </recommendedName>
    <alternativeName>
        <fullName evidence="1">Arginosuccinase</fullName>
    </alternativeName>
</protein>
<keyword id="KW-0028">Amino-acid biosynthesis</keyword>
<keyword id="KW-0055">Arginine biosynthesis</keyword>
<keyword id="KW-0963">Cytoplasm</keyword>
<keyword id="KW-0456">Lyase</keyword>
<keyword id="KW-1185">Reference proteome</keyword>
<gene>
    <name evidence="1" type="primary">argH</name>
    <name type="ordered locus">Rcas_3075</name>
</gene>